<feature type="chain" id="PRO_0000303553" description="tRNA N6-adenosine threonylcarbamoyltransferase">
    <location>
        <begin position="1"/>
        <end position="340"/>
    </location>
</feature>
<feature type="binding site" evidence="1">
    <location>
        <position position="115"/>
    </location>
    <ligand>
        <name>Fe cation</name>
        <dbReference type="ChEBI" id="CHEBI:24875"/>
    </ligand>
</feature>
<feature type="binding site" evidence="1">
    <location>
        <position position="119"/>
    </location>
    <ligand>
        <name>Fe cation</name>
        <dbReference type="ChEBI" id="CHEBI:24875"/>
    </ligand>
</feature>
<feature type="binding site" evidence="1">
    <location>
        <begin position="137"/>
        <end position="141"/>
    </location>
    <ligand>
        <name>substrate</name>
    </ligand>
</feature>
<feature type="binding site" evidence="1">
    <location>
        <position position="170"/>
    </location>
    <ligand>
        <name>substrate</name>
    </ligand>
</feature>
<feature type="binding site" evidence="1">
    <location>
        <position position="183"/>
    </location>
    <ligand>
        <name>substrate</name>
    </ligand>
</feature>
<feature type="binding site" evidence="1">
    <location>
        <position position="187"/>
    </location>
    <ligand>
        <name>substrate</name>
    </ligand>
</feature>
<feature type="binding site" evidence="1">
    <location>
        <position position="276"/>
    </location>
    <ligand>
        <name>substrate</name>
    </ligand>
</feature>
<feature type="binding site" evidence="1">
    <location>
        <position position="304"/>
    </location>
    <ligand>
        <name>Fe cation</name>
        <dbReference type="ChEBI" id="CHEBI:24875"/>
    </ligand>
</feature>
<accession>Q8CNL9</accession>
<organism>
    <name type="scientific">Staphylococcus epidermidis (strain ATCC 12228 / FDA PCI 1200)</name>
    <dbReference type="NCBI Taxonomy" id="176280"/>
    <lineage>
        <taxon>Bacteria</taxon>
        <taxon>Bacillati</taxon>
        <taxon>Bacillota</taxon>
        <taxon>Bacilli</taxon>
        <taxon>Bacillales</taxon>
        <taxon>Staphylococcaceae</taxon>
        <taxon>Staphylococcus</taxon>
    </lineage>
</organism>
<gene>
    <name evidence="1" type="primary">tsaD</name>
    <name type="synonym">gcp</name>
    <name type="ordered locus">SE_1650</name>
</gene>
<evidence type="ECO:0000255" key="1">
    <source>
        <dbReference type="HAMAP-Rule" id="MF_01445"/>
    </source>
</evidence>
<protein>
    <recommendedName>
        <fullName evidence="1">tRNA N6-adenosine threonylcarbamoyltransferase</fullName>
        <ecNumber evidence="1">2.3.1.234</ecNumber>
    </recommendedName>
    <alternativeName>
        <fullName evidence="1">N6-L-threonylcarbamoyladenine synthase</fullName>
        <shortName evidence="1">t(6)A synthase</shortName>
    </alternativeName>
    <alternativeName>
        <fullName evidence="1">t(6)A37 threonylcarbamoyladenosine biosynthesis protein TsaD</fullName>
    </alternativeName>
    <alternativeName>
        <fullName evidence="1">tRNA threonylcarbamoyladenosine biosynthesis protein TsaD</fullName>
    </alternativeName>
</protein>
<reference key="1">
    <citation type="journal article" date="2003" name="Mol. Microbiol.">
        <title>Genome-based analysis of virulence genes in a non-biofilm-forming Staphylococcus epidermidis strain (ATCC 12228).</title>
        <authorList>
            <person name="Zhang Y.-Q."/>
            <person name="Ren S.-X."/>
            <person name="Li H.-L."/>
            <person name="Wang Y.-X."/>
            <person name="Fu G."/>
            <person name="Yang J."/>
            <person name="Qin Z.-Q."/>
            <person name="Miao Y.-G."/>
            <person name="Wang W.-Y."/>
            <person name="Chen R.-S."/>
            <person name="Shen Y."/>
            <person name="Chen Z."/>
            <person name="Yuan Z.-H."/>
            <person name="Zhao G.-P."/>
            <person name="Qu D."/>
            <person name="Danchin A."/>
            <person name="Wen Y.-M."/>
        </authorList>
    </citation>
    <scope>NUCLEOTIDE SEQUENCE [LARGE SCALE GENOMIC DNA]</scope>
    <source>
        <strain>ATCC 12228 / FDA PCI 1200</strain>
    </source>
</reference>
<dbReference type="EC" id="2.3.1.234" evidence="1"/>
<dbReference type="EMBL" id="AE015929">
    <property type="protein sequence ID" value="AAO05249.1"/>
    <property type="molecule type" value="Genomic_DNA"/>
</dbReference>
<dbReference type="RefSeq" id="NP_765205.1">
    <property type="nucleotide sequence ID" value="NC_004461.1"/>
</dbReference>
<dbReference type="RefSeq" id="WP_001830015.1">
    <property type="nucleotide sequence ID" value="NZ_WBME01000022.1"/>
</dbReference>
<dbReference type="SMR" id="Q8CNL9"/>
<dbReference type="GeneID" id="50018251"/>
<dbReference type="KEGG" id="sep:SE_1650"/>
<dbReference type="PATRIC" id="fig|176280.10.peg.1614"/>
<dbReference type="eggNOG" id="COG0533">
    <property type="taxonomic scope" value="Bacteria"/>
</dbReference>
<dbReference type="HOGENOM" id="CLU_023208_0_2_9"/>
<dbReference type="OrthoDB" id="9806197at2"/>
<dbReference type="Proteomes" id="UP000001411">
    <property type="component" value="Chromosome"/>
</dbReference>
<dbReference type="GO" id="GO:0005737">
    <property type="term" value="C:cytoplasm"/>
    <property type="evidence" value="ECO:0007669"/>
    <property type="project" value="UniProtKB-SubCell"/>
</dbReference>
<dbReference type="GO" id="GO:0005506">
    <property type="term" value="F:iron ion binding"/>
    <property type="evidence" value="ECO:0007669"/>
    <property type="project" value="UniProtKB-UniRule"/>
</dbReference>
<dbReference type="GO" id="GO:0061711">
    <property type="term" value="F:N(6)-L-threonylcarbamoyladenine synthase activity"/>
    <property type="evidence" value="ECO:0007669"/>
    <property type="project" value="UniProtKB-EC"/>
</dbReference>
<dbReference type="GO" id="GO:0002949">
    <property type="term" value="P:tRNA threonylcarbamoyladenosine modification"/>
    <property type="evidence" value="ECO:0007669"/>
    <property type="project" value="UniProtKB-UniRule"/>
</dbReference>
<dbReference type="CDD" id="cd24133">
    <property type="entry name" value="ASKHA_NBD_TsaD_bac"/>
    <property type="match status" value="1"/>
</dbReference>
<dbReference type="FunFam" id="3.30.420.40:FF:000012">
    <property type="entry name" value="tRNA N6-adenosine threonylcarbamoyltransferase"/>
    <property type="match status" value="1"/>
</dbReference>
<dbReference type="FunFam" id="3.30.420.40:FF:000040">
    <property type="entry name" value="tRNA N6-adenosine threonylcarbamoyltransferase"/>
    <property type="match status" value="1"/>
</dbReference>
<dbReference type="Gene3D" id="3.30.420.40">
    <property type="match status" value="2"/>
</dbReference>
<dbReference type="HAMAP" id="MF_01445">
    <property type="entry name" value="TsaD"/>
    <property type="match status" value="1"/>
</dbReference>
<dbReference type="InterPro" id="IPR043129">
    <property type="entry name" value="ATPase_NBD"/>
</dbReference>
<dbReference type="InterPro" id="IPR000905">
    <property type="entry name" value="Gcp-like_dom"/>
</dbReference>
<dbReference type="InterPro" id="IPR017861">
    <property type="entry name" value="KAE1/TsaD"/>
</dbReference>
<dbReference type="InterPro" id="IPR017860">
    <property type="entry name" value="Peptidase_M22_CS"/>
</dbReference>
<dbReference type="InterPro" id="IPR022450">
    <property type="entry name" value="TsaD"/>
</dbReference>
<dbReference type="NCBIfam" id="TIGR00329">
    <property type="entry name" value="gcp_kae1"/>
    <property type="match status" value="1"/>
</dbReference>
<dbReference type="NCBIfam" id="TIGR03723">
    <property type="entry name" value="T6A_TsaD_YgjD"/>
    <property type="match status" value="1"/>
</dbReference>
<dbReference type="PANTHER" id="PTHR11735">
    <property type="entry name" value="TRNA N6-ADENOSINE THREONYLCARBAMOYLTRANSFERASE"/>
    <property type="match status" value="1"/>
</dbReference>
<dbReference type="PANTHER" id="PTHR11735:SF6">
    <property type="entry name" value="TRNA N6-ADENOSINE THREONYLCARBAMOYLTRANSFERASE, MITOCHONDRIAL"/>
    <property type="match status" value="1"/>
</dbReference>
<dbReference type="Pfam" id="PF00814">
    <property type="entry name" value="TsaD"/>
    <property type="match status" value="1"/>
</dbReference>
<dbReference type="PRINTS" id="PR00789">
    <property type="entry name" value="OSIALOPTASE"/>
</dbReference>
<dbReference type="SUPFAM" id="SSF53067">
    <property type="entry name" value="Actin-like ATPase domain"/>
    <property type="match status" value="2"/>
</dbReference>
<dbReference type="PROSITE" id="PS01016">
    <property type="entry name" value="GLYCOPROTEASE"/>
    <property type="match status" value="1"/>
</dbReference>
<keyword id="KW-0012">Acyltransferase</keyword>
<keyword id="KW-0963">Cytoplasm</keyword>
<keyword id="KW-0408">Iron</keyword>
<keyword id="KW-0479">Metal-binding</keyword>
<keyword id="KW-0808">Transferase</keyword>
<keyword id="KW-0819">tRNA processing</keyword>
<comment type="function">
    <text evidence="1">Required for the formation of a threonylcarbamoyl group on adenosine at position 37 (t(6)A37) in tRNAs that read codons beginning with adenine. Is involved in the transfer of the threonylcarbamoyl moiety of threonylcarbamoyl-AMP (TC-AMP) to the N6 group of A37, together with TsaE and TsaB. TsaD likely plays a direct catalytic role in this reaction.</text>
</comment>
<comment type="catalytic activity">
    <reaction evidence="1">
        <text>L-threonylcarbamoyladenylate + adenosine(37) in tRNA = N(6)-L-threonylcarbamoyladenosine(37) in tRNA + AMP + H(+)</text>
        <dbReference type="Rhea" id="RHEA:37059"/>
        <dbReference type="Rhea" id="RHEA-COMP:10162"/>
        <dbReference type="Rhea" id="RHEA-COMP:10163"/>
        <dbReference type="ChEBI" id="CHEBI:15378"/>
        <dbReference type="ChEBI" id="CHEBI:73682"/>
        <dbReference type="ChEBI" id="CHEBI:74411"/>
        <dbReference type="ChEBI" id="CHEBI:74418"/>
        <dbReference type="ChEBI" id="CHEBI:456215"/>
        <dbReference type="EC" id="2.3.1.234"/>
    </reaction>
</comment>
<comment type="cofactor">
    <cofactor evidence="1">
        <name>Fe(2+)</name>
        <dbReference type="ChEBI" id="CHEBI:29033"/>
    </cofactor>
    <text evidence="1">Binds 1 Fe(2+) ion per subunit.</text>
</comment>
<comment type="subcellular location">
    <subcellularLocation>
        <location evidence="1">Cytoplasm</location>
    </subcellularLocation>
</comment>
<comment type="similarity">
    <text evidence="1">Belongs to the KAE1 / TsaD family.</text>
</comment>
<sequence length="340" mass="36774">MTNNKLILAIETSCDETSVSVIKNGTELLSNTVLSQIDSHKRFGGVVPEVASRHHVEGITATIDESLVSAKVKMEDIDAIAVTQGPGLIGALLIGINAAKALAFAYDKPIIPVHHIAGHIYANHLEQPLTFPLMSLIVSGGHTELVYMKNHLDFEVIGETRDDAVGEAYDKVARTINLPYPGGPHIDRLAAKGKDVYDFPRVWLEKDSYDFSFSGLKSAVINKLHNLRQKNIEIVAEDVATSFQNSVVEVLTYKAIHACKTYNVNRLIVAGGVASNKGLRNALSEACKKEGIHLTIPSPVLCTDNAAMIGAAGYYLYQAGLRGDLALNGQNNIDIETFSV</sequence>
<proteinExistence type="inferred from homology"/>
<name>TSAD_STAES</name>